<feature type="chain" id="PRO_0000152502" description="tRNA pseudouridine synthase D">
    <location>
        <begin position="1"/>
        <end position="381"/>
    </location>
</feature>
<feature type="domain" description="TRUD" evidence="1">
    <location>
        <begin position="160"/>
        <end position="335"/>
    </location>
</feature>
<feature type="active site" description="Nucleophile" evidence="1">
    <location>
        <position position="81"/>
    </location>
</feature>
<protein>
    <recommendedName>
        <fullName evidence="1">tRNA pseudouridine synthase D</fullName>
        <ecNumber evidence="1">5.4.99.27</ecNumber>
    </recommendedName>
    <alternativeName>
        <fullName evidence="1">tRNA pseudouridine(13) synthase</fullName>
    </alternativeName>
    <alternativeName>
        <fullName evidence="1">tRNA pseudouridylate synthase D</fullName>
    </alternativeName>
    <alternativeName>
        <fullName evidence="1">tRNA-uridine isomerase D</fullName>
    </alternativeName>
</protein>
<accession>P55985</accession>
<dbReference type="EC" id="5.4.99.27" evidence="1"/>
<dbReference type="EMBL" id="AE000511">
    <property type="protein sequence ID" value="AAD07971.1"/>
    <property type="molecule type" value="Genomic_DNA"/>
</dbReference>
<dbReference type="PIR" id="F64635">
    <property type="entry name" value="F64635"/>
</dbReference>
<dbReference type="RefSeq" id="NP_207718.1">
    <property type="nucleotide sequence ID" value="NC_000915.1"/>
</dbReference>
<dbReference type="RefSeq" id="WP_001052415.1">
    <property type="nucleotide sequence ID" value="NC_018939.1"/>
</dbReference>
<dbReference type="SMR" id="P55985"/>
<dbReference type="FunCoup" id="P55985">
    <property type="interactions" value="38"/>
</dbReference>
<dbReference type="STRING" id="85962.HP_0926"/>
<dbReference type="PaxDb" id="85962-C694_04765"/>
<dbReference type="EnsemblBacteria" id="AAD07971">
    <property type="protein sequence ID" value="AAD07971"/>
    <property type="gene ID" value="HP_0926"/>
</dbReference>
<dbReference type="KEGG" id="heo:C694_04765"/>
<dbReference type="KEGG" id="hpy:HP_0926"/>
<dbReference type="PATRIC" id="fig|85962.47.peg.991"/>
<dbReference type="eggNOG" id="COG0585">
    <property type="taxonomic scope" value="Bacteria"/>
</dbReference>
<dbReference type="InParanoid" id="P55985"/>
<dbReference type="OrthoDB" id="1550679at2"/>
<dbReference type="PhylomeDB" id="P55985"/>
<dbReference type="Proteomes" id="UP000000429">
    <property type="component" value="Chromosome"/>
</dbReference>
<dbReference type="GO" id="GO:0005829">
    <property type="term" value="C:cytosol"/>
    <property type="evidence" value="ECO:0000318"/>
    <property type="project" value="GO_Central"/>
</dbReference>
<dbReference type="GO" id="GO:0009982">
    <property type="term" value="F:pseudouridine synthase activity"/>
    <property type="evidence" value="ECO:0000318"/>
    <property type="project" value="GO_Central"/>
</dbReference>
<dbReference type="GO" id="GO:0003723">
    <property type="term" value="F:RNA binding"/>
    <property type="evidence" value="ECO:0007669"/>
    <property type="project" value="InterPro"/>
</dbReference>
<dbReference type="GO" id="GO:0160150">
    <property type="term" value="F:tRNA pseudouridine(13) synthase activity"/>
    <property type="evidence" value="ECO:0007669"/>
    <property type="project" value="UniProtKB-EC"/>
</dbReference>
<dbReference type="GO" id="GO:0001522">
    <property type="term" value="P:pseudouridine synthesis"/>
    <property type="evidence" value="ECO:0000318"/>
    <property type="project" value="GO_Central"/>
</dbReference>
<dbReference type="GO" id="GO:0031119">
    <property type="term" value="P:tRNA pseudouridine synthesis"/>
    <property type="evidence" value="ECO:0007669"/>
    <property type="project" value="UniProtKB-UniRule"/>
</dbReference>
<dbReference type="CDD" id="cd02575">
    <property type="entry name" value="PseudoU_synth_EcTruD"/>
    <property type="match status" value="1"/>
</dbReference>
<dbReference type="FunFam" id="3.30.2350.20:FF:000008">
    <property type="entry name" value="tRNA pseudouridine synthase D"/>
    <property type="match status" value="1"/>
</dbReference>
<dbReference type="Gene3D" id="3.30.2350.20">
    <property type="entry name" value="TruD, catalytic domain"/>
    <property type="match status" value="1"/>
</dbReference>
<dbReference type="HAMAP" id="MF_01082">
    <property type="entry name" value="TruD"/>
    <property type="match status" value="1"/>
</dbReference>
<dbReference type="InterPro" id="IPR020103">
    <property type="entry name" value="PsdUridine_synth_cat_dom_sf"/>
</dbReference>
<dbReference type="InterPro" id="IPR001656">
    <property type="entry name" value="PsdUridine_synth_TruD"/>
</dbReference>
<dbReference type="InterPro" id="IPR020119">
    <property type="entry name" value="PsdUridine_synth_TruD_CS"/>
</dbReference>
<dbReference type="InterPro" id="IPR011760">
    <property type="entry name" value="PsdUridine_synth_TruD_insert"/>
</dbReference>
<dbReference type="InterPro" id="IPR042214">
    <property type="entry name" value="TruD_catalytic"/>
</dbReference>
<dbReference type="InterPro" id="IPR050170">
    <property type="entry name" value="TruD_pseudoU_synthase"/>
</dbReference>
<dbReference type="NCBIfam" id="NF002154">
    <property type="entry name" value="PRK00984.1-3"/>
    <property type="match status" value="1"/>
</dbReference>
<dbReference type="NCBIfam" id="TIGR00094">
    <property type="entry name" value="tRNA_TruD_broad"/>
    <property type="match status" value="1"/>
</dbReference>
<dbReference type="PANTHER" id="PTHR47811">
    <property type="entry name" value="TRNA PSEUDOURIDINE SYNTHASE D"/>
    <property type="match status" value="1"/>
</dbReference>
<dbReference type="PANTHER" id="PTHR47811:SF1">
    <property type="entry name" value="TRNA PSEUDOURIDINE SYNTHASE D"/>
    <property type="match status" value="1"/>
</dbReference>
<dbReference type="Pfam" id="PF01142">
    <property type="entry name" value="TruD"/>
    <property type="match status" value="1"/>
</dbReference>
<dbReference type="PIRSF" id="PIRSF037016">
    <property type="entry name" value="Pseudouridin_synth_euk_prd"/>
    <property type="match status" value="1"/>
</dbReference>
<dbReference type="SUPFAM" id="SSF55120">
    <property type="entry name" value="Pseudouridine synthase"/>
    <property type="match status" value="1"/>
</dbReference>
<dbReference type="PROSITE" id="PS50984">
    <property type="entry name" value="TRUD"/>
    <property type="match status" value="1"/>
</dbReference>
<dbReference type="PROSITE" id="PS01268">
    <property type="entry name" value="UPF0024"/>
    <property type="match status" value="1"/>
</dbReference>
<reference key="1">
    <citation type="journal article" date="1997" name="Nature">
        <title>The complete genome sequence of the gastric pathogen Helicobacter pylori.</title>
        <authorList>
            <person name="Tomb J.-F."/>
            <person name="White O."/>
            <person name="Kerlavage A.R."/>
            <person name="Clayton R.A."/>
            <person name="Sutton G.G."/>
            <person name="Fleischmann R.D."/>
            <person name="Ketchum K.A."/>
            <person name="Klenk H.-P."/>
            <person name="Gill S.R."/>
            <person name="Dougherty B.A."/>
            <person name="Nelson K.E."/>
            <person name="Quackenbush J."/>
            <person name="Zhou L."/>
            <person name="Kirkness E.F."/>
            <person name="Peterson S.N."/>
            <person name="Loftus B.J."/>
            <person name="Richardson D.L."/>
            <person name="Dodson R.J."/>
            <person name="Khalak H.G."/>
            <person name="Glodek A."/>
            <person name="McKenney K."/>
            <person name="FitzGerald L.M."/>
            <person name="Lee N."/>
            <person name="Adams M.D."/>
            <person name="Hickey E.K."/>
            <person name="Berg D.E."/>
            <person name="Gocayne J.D."/>
            <person name="Utterback T.R."/>
            <person name="Peterson J.D."/>
            <person name="Kelley J.M."/>
            <person name="Cotton M.D."/>
            <person name="Weidman J.F."/>
            <person name="Fujii C."/>
            <person name="Bowman C."/>
            <person name="Watthey L."/>
            <person name="Wallin E."/>
            <person name="Hayes W.S."/>
            <person name="Borodovsky M."/>
            <person name="Karp P.D."/>
            <person name="Smith H.O."/>
            <person name="Fraser C.M."/>
            <person name="Venter J.C."/>
        </authorList>
    </citation>
    <scope>NUCLEOTIDE SEQUENCE [LARGE SCALE GENOMIC DNA]</scope>
    <source>
        <strain>ATCC 700392 / 26695</strain>
    </source>
</reference>
<keyword id="KW-0413">Isomerase</keyword>
<keyword id="KW-1185">Reference proteome</keyword>
<keyword id="KW-0819">tRNA processing</keyword>
<name>TRUD_HELPY</name>
<comment type="function">
    <text evidence="1">Responsible for synthesis of pseudouridine from uracil-13 in transfer RNAs.</text>
</comment>
<comment type="catalytic activity">
    <reaction evidence="1">
        <text>uridine(13) in tRNA = pseudouridine(13) in tRNA</text>
        <dbReference type="Rhea" id="RHEA:42540"/>
        <dbReference type="Rhea" id="RHEA-COMP:10105"/>
        <dbReference type="Rhea" id="RHEA-COMP:10106"/>
        <dbReference type="ChEBI" id="CHEBI:65314"/>
        <dbReference type="ChEBI" id="CHEBI:65315"/>
        <dbReference type="EC" id="5.4.99.27"/>
    </reaction>
</comment>
<comment type="similarity">
    <text evidence="1">Belongs to the pseudouridine synthase TruD family.</text>
</comment>
<organism>
    <name type="scientific">Helicobacter pylori (strain ATCC 700392 / 26695)</name>
    <name type="common">Campylobacter pylori</name>
    <dbReference type="NCBI Taxonomy" id="85962"/>
    <lineage>
        <taxon>Bacteria</taxon>
        <taxon>Pseudomonadati</taxon>
        <taxon>Campylobacterota</taxon>
        <taxon>Epsilonproteobacteria</taxon>
        <taxon>Campylobacterales</taxon>
        <taxon>Helicobacteraceae</taxon>
        <taxon>Helicobacter</taxon>
    </lineage>
</organism>
<proteinExistence type="inferred from homology"/>
<evidence type="ECO:0000255" key="1">
    <source>
        <dbReference type="HAMAP-Rule" id="MF_01082"/>
    </source>
</evidence>
<sequence>MNLNFMPLLHAYNHASIDFHFNSSARDFCVHEVPLYEFSNTGEHAVIQVRKSGLSTLEMLQIFSQILGVRIAELGYAGLKDKNALTTQFISLPKKYAPLLEKNTSNFQEKNLKILSLNYHHNKIKLGHLKGNRFFMRFKKMTPLNAQKTKQVLEQIAQFGMPNYFGSQRFGKFNDNHQEGLKILQNQTKFAHQKLNAFLISSYQSYLFNALLSKRLEISKIISAFSVKENLEFFKQKNLSVDSDTLKTLKNQAHPFKILEGDVMCHYPYGKFFDALELEKEGERFLKKEVAPTGLLDGKKALYAKNLSLEIEKEFQHNLLSSHAKTLGSRRFFWVFVENVTSQYVKEKAQFELGFYLPKGSYASALLKEIKHEKGENNDEF</sequence>
<gene>
    <name evidence="1" type="primary">truD</name>
    <name type="ordered locus">HP_0926</name>
</gene>